<evidence type="ECO:0000255" key="1">
    <source>
        <dbReference type="HAMAP-Rule" id="MF_01336"/>
    </source>
</evidence>
<evidence type="ECO:0000305" key="2"/>
<proteinExistence type="inferred from homology"/>
<organism>
    <name type="scientific">Blochmanniella floridana</name>
    <dbReference type="NCBI Taxonomy" id="203907"/>
    <lineage>
        <taxon>Bacteria</taxon>
        <taxon>Pseudomonadati</taxon>
        <taxon>Pseudomonadota</taxon>
        <taxon>Gammaproteobacteria</taxon>
        <taxon>Enterobacterales</taxon>
        <taxon>Enterobacteriaceae</taxon>
        <taxon>ant endosymbionts</taxon>
        <taxon>Candidatus Blochmanniella</taxon>
    </lineage>
</organism>
<keyword id="KW-1185">Reference proteome</keyword>
<keyword id="KW-0687">Ribonucleoprotein</keyword>
<keyword id="KW-0689">Ribosomal protein</keyword>
<keyword id="KW-0694">RNA-binding</keyword>
<keyword id="KW-0699">rRNA-binding</keyword>
<feature type="chain" id="PRO_0000181476" description="Large ribosomal subunit protein bL25">
    <location>
        <begin position="1"/>
        <end position="103"/>
    </location>
</feature>
<reference key="1">
    <citation type="journal article" date="2003" name="Proc. Natl. Acad. Sci. U.S.A.">
        <title>The genome sequence of Blochmannia floridanus: comparative analysis of reduced genomes.</title>
        <authorList>
            <person name="Gil R."/>
            <person name="Silva F.J."/>
            <person name="Zientz E."/>
            <person name="Delmotte F."/>
            <person name="Gonzalez-Candelas F."/>
            <person name="Latorre A."/>
            <person name="Rausell C."/>
            <person name="Kamerbeek J."/>
            <person name="Gadau J."/>
            <person name="Hoelldobler B."/>
            <person name="van Ham R.C.H.J."/>
            <person name="Gross R."/>
            <person name="Moya A."/>
        </authorList>
    </citation>
    <scope>NUCLEOTIDE SEQUENCE [LARGE SCALE GENOMIC DNA]</scope>
</reference>
<gene>
    <name evidence="1" type="primary">rplY</name>
    <name type="ordered locus">Bfl473</name>
</gene>
<accession>Q7VRX2</accession>
<protein>
    <recommendedName>
        <fullName evidence="1">Large ribosomal subunit protein bL25</fullName>
    </recommendedName>
    <alternativeName>
        <fullName evidence="2">50S ribosomal protein L25</fullName>
    </alternativeName>
</protein>
<name>RL25_BLOFL</name>
<comment type="function">
    <text evidence="1">This is one of the proteins that binds to the 5S RNA in the ribosome where it forms part of the central protuberance.</text>
</comment>
<comment type="subunit">
    <text evidence="1">Part of the 50S ribosomal subunit; part of the 5S rRNA/L5/L18/L25 subcomplex. Contacts the 5S rRNA. Binds to the 5S rRNA independently of L5 and L18.</text>
</comment>
<comment type="similarity">
    <text evidence="1">Belongs to the bacterial ribosomal protein bL25 family.</text>
</comment>
<dbReference type="EMBL" id="BX248583">
    <property type="protein sequence ID" value="CAD83162.1"/>
    <property type="molecule type" value="Genomic_DNA"/>
</dbReference>
<dbReference type="SMR" id="Q7VRX2"/>
<dbReference type="STRING" id="203907.Bfl473"/>
<dbReference type="KEGG" id="bfl:Bfl473"/>
<dbReference type="eggNOG" id="COG1825">
    <property type="taxonomic scope" value="Bacteria"/>
</dbReference>
<dbReference type="HOGENOM" id="CLU_137946_0_0_6"/>
<dbReference type="OrthoDB" id="9806411at2"/>
<dbReference type="Proteomes" id="UP000002192">
    <property type="component" value="Chromosome"/>
</dbReference>
<dbReference type="GO" id="GO:0022625">
    <property type="term" value="C:cytosolic large ribosomal subunit"/>
    <property type="evidence" value="ECO:0007669"/>
    <property type="project" value="TreeGrafter"/>
</dbReference>
<dbReference type="GO" id="GO:0008097">
    <property type="term" value="F:5S rRNA binding"/>
    <property type="evidence" value="ECO:0007669"/>
    <property type="project" value="InterPro"/>
</dbReference>
<dbReference type="GO" id="GO:0003735">
    <property type="term" value="F:structural constituent of ribosome"/>
    <property type="evidence" value="ECO:0007669"/>
    <property type="project" value="InterPro"/>
</dbReference>
<dbReference type="GO" id="GO:0006412">
    <property type="term" value="P:translation"/>
    <property type="evidence" value="ECO:0007669"/>
    <property type="project" value="UniProtKB-UniRule"/>
</dbReference>
<dbReference type="CDD" id="cd00495">
    <property type="entry name" value="Ribosomal_L25_TL5_CTC"/>
    <property type="match status" value="1"/>
</dbReference>
<dbReference type="Gene3D" id="2.40.240.10">
    <property type="entry name" value="Ribosomal Protein L25, Chain P"/>
    <property type="match status" value="1"/>
</dbReference>
<dbReference type="HAMAP" id="MF_01336">
    <property type="entry name" value="Ribosomal_bL25"/>
    <property type="match status" value="1"/>
</dbReference>
<dbReference type="InterPro" id="IPR020056">
    <property type="entry name" value="Rbsml_bL25/Gln-tRNA_synth_N"/>
</dbReference>
<dbReference type="InterPro" id="IPR011035">
    <property type="entry name" value="Ribosomal_bL25/Gln-tRNA_synth"/>
</dbReference>
<dbReference type="InterPro" id="IPR020055">
    <property type="entry name" value="Ribosomal_bL25_short"/>
</dbReference>
<dbReference type="InterPro" id="IPR029751">
    <property type="entry name" value="Ribosomal_L25_dom"/>
</dbReference>
<dbReference type="InterPro" id="IPR020930">
    <property type="entry name" value="Ribosomal_uL5_bac-type"/>
</dbReference>
<dbReference type="NCBIfam" id="NF004612">
    <property type="entry name" value="PRK05943.1"/>
    <property type="match status" value="1"/>
</dbReference>
<dbReference type="PANTHER" id="PTHR33284">
    <property type="entry name" value="RIBOSOMAL PROTEIN L25/GLN-TRNA SYNTHETASE, ANTI-CODON-BINDING DOMAIN-CONTAINING PROTEIN"/>
    <property type="match status" value="1"/>
</dbReference>
<dbReference type="PANTHER" id="PTHR33284:SF1">
    <property type="entry name" value="RIBOSOMAL PROTEIN L25_GLN-TRNA SYNTHETASE, ANTI-CODON-BINDING DOMAIN-CONTAINING PROTEIN"/>
    <property type="match status" value="1"/>
</dbReference>
<dbReference type="Pfam" id="PF01386">
    <property type="entry name" value="Ribosomal_L25p"/>
    <property type="match status" value="1"/>
</dbReference>
<dbReference type="SUPFAM" id="SSF50715">
    <property type="entry name" value="Ribosomal protein L25-like"/>
    <property type="match status" value="1"/>
</dbReference>
<sequence length="103" mass="11968">MLIIKAILRTEIKKSITRKIRKNGGCPAVIYNKNKSPNINVQLSNKDLSHPENVHYFLKNNKVQILINNEFTITAKIQDVQYHPYKSNIIHIDFIHITTQSRS</sequence>